<gene>
    <name evidence="1" type="primary">recX</name>
    <name type="ordered locus">Rpic_0472</name>
</gene>
<evidence type="ECO:0000255" key="1">
    <source>
        <dbReference type="HAMAP-Rule" id="MF_01114"/>
    </source>
</evidence>
<keyword id="KW-0963">Cytoplasm</keyword>
<name>RECX_RALPJ</name>
<organism>
    <name type="scientific">Ralstonia pickettii (strain 12J)</name>
    <dbReference type="NCBI Taxonomy" id="402626"/>
    <lineage>
        <taxon>Bacteria</taxon>
        <taxon>Pseudomonadati</taxon>
        <taxon>Pseudomonadota</taxon>
        <taxon>Betaproteobacteria</taxon>
        <taxon>Burkholderiales</taxon>
        <taxon>Burkholderiaceae</taxon>
        <taxon>Ralstonia</taxon>
    </lineage>
</organism>
<proteinExistence type="inferred from homology"/>
<sequence>MPLPRQPLSLKARALGYLSRREHSRVELRRKLVPHAESAEEVDALLDWLEGENWLSNTRFAESMVHRRAGRYGTARLMQELKTHQLGEETLGEVKAQLQSTEAVRAKALWEKRFGRPPADLAERAKQVRYMMARGFSRSVVSRIIAGADELLEDGDMSD</sequence>
<accession>B2UGE0</accession>
<reference key="1">
    <citation type="submission" date="2008-05" db="EMBL/GenBank/DDBJ databases">
        <title>Complete sequence of chromosome 1 of Ralstonia pickettii 12J.</title>
        <authorList>
            <person name="Lucas S."/>
            <person name="Copeland A."/>
            <person name="Lapidus A."/>
            <person name="Glavina del Rio T."/>
            <person name="Dalin E."/>
            <person name="Tice H."/>
            <person name="Bruce D."/>
            <person name="Goodwin L."/>
            <person name="Pitluck S."/>
            <person name="Meincke L."/>
            <person name="Brettin T."/>
            <person name="Detter J.C."/>
            <person name="Han C."/>
            <person name="Kuske C.R."/>
            <person name="Schmutz J."/>
            <person name="Larimer F."/>
            <person name="Land M."/>
            <person name="Hauser L."/>
            <person name="Kyrpides N."/>
            <person name="Mikhailova N."/>
            <person name="Marsh T."/>
            <person name="Richardson P."/>
        </authorList>
    </citation>
    <scope>NUCLEOTIDE SEQUENCE [LARGE SCALE GENOMIC DNA]</scope>
    <source>
        <strain>12J</strain>
    </source>
</reference>
<feature type="chain" id="PRO_1000137185" description="Regulatory protein RecX">
    <location>
        <begin position="1"/>
        <end position="159"/>
    </location>
</feature>
<comment type="function">
    <text evidence="1">Modulates RecA activity.</text>
</comment>
<comment type="subcellular location">
    <subcellularLocation>
        <location evidence="1">Cytoplasm</location>
    </subcellularLocation>
</comment>
<comment type="similarity">
    <text evidence="1">Belongs to the RecX family.</text>
</comment>
<protein>
    <recommendedName>
        <fullName evidence="1">Regulatory protein RecX</fullName>
    </recommendedName>
</protein>
<dbReference type="EMBL" id="CP001068">
    <property type="protein sequence ID" value="ACD25627.1"/>
    <property type="molecule type" value="Genomic_DNA"/>
</dbReference>
<dbReference type="SMR" id="B2UGE0"/>
<dbReference type="STRING" id="402626.Rpic_0472"/>
<dbReference type="KEGG" id="rpi:Rpic_0472"/>
<dbReference type="eggNOG" id="COG2137">
    <property type="taxonomic scope" value="Bacteria"/>
</dbReference>
<dbReference type="HOGENOM" id="CLU_066607_3_1_4"/>
<dbReference type="GO" id="GO:0005737">
    <property type="term" value="C:cytoplasm"/>
    <property type="evidence" value="ECO:0007669"/>
    <property type="project" value="UniProtKB-SubCell"/>
</dbReference>
<dbReference type="GO" id="GO:0006282">
    <property type="term" value="P:regulation of DNA repair"/>
    <property type="evidence" value="ECO:0007669"/>
    <property type="project" value="UniProtKB-UniRule"/>
</dbReference>
<dbReference type="Gene3D" id="1.10.10.10">
    <property type="entry name" value="Winged helix-like DNA-binding domain superfamily/Winged helix DNA-binding domain"/>
    <property type="match status" value="3"/>
</dbReference>
<dbReference type="HAMAP" id="MF_01114">
    <property type="entry name" value="RecX"/>
    <property type="match status" value="1"/>
</dbReference>
<dbReference type="InterPro" id="IPR053926">
    <property type="entry name" value="RecX_HTH_1st"/>
</dbReference>
<dbReference type="InterPro" id="IPR053924">
    <property type="entry name" value="RecX_HTH_2nd"/>
</dbReference>
<dbReference type="InterPro" id="IPR053925">
    <property type="entry name" value="RecX_HTH_3rd"/>
</dbReference>
<dbReference type="InterPro" id="IPR003783">
    <property type="entry name" value="Regulatory_RecX"/>
</dbReference>
<dbReference type="InterPro" id="IPR036388">
    <property type="entry name" value="WH-like_DNA-bd_sf"/>
</dbReference>
<dbReference type="NCBIfam" id="NF001055">
    <property type="entry name" value="PRK00117.2-5"/>
    <property type="match status" value="1"/>
</dbReference>
<dbReference type="PANTHER" id="PTHR33602">
    <property type="entry name" value="REGULATORY PROTEIN RECX FAMILY PROTEIN"/>
    <property type="match status" value="1"/>
</dbReference>
<dbReference type="PANTHER" id="PTHR33602:SF1">
    <property type="entry name" value="REGULATORY PROTEIN RECX FAMILY PROTEIN"/>
    <property type="match status" value="1"/>
</dbReference>
<dbReference type="Pfam" id="PF21982">
    <property type="entry name" value="RecX_HTH1"/>
    <property type="match status" value="1"/>
</dbReference>
<dbReference type="Pfam" id="PF02631">
    <property type="entry name" value="RecX_HTH2"/>
    <property type="match status" value="1"/>
</dbReference>
<dbReference type="Pfam" id="PF21981">
    <property type="entry name" value="RecX_HTH3"/>
    <property type="match status" value="1"/>
</dbReference>